<name>DRAM2_MOUSE</name>
<feature type="chain" id="PRO_0000254103" description="DNA damage-regulated autophagy modulator protein 2">
    <location>
        <begin position="1"/>
        <end position="267"/>
    </location>
</feature>
<feature type="transmembrane region" description="Helical" evidence="2">
    <location>
        <begin position="8"/>
        <end position="28"/>
    </location>
</feature>
<feature type="transmembrane region" description="Helical" evidence="2">
    <location>
        <begin position="53"/>
        <end position="73"/>
    </location>
</feature>
<feature type="transmembrane region" description="Helical" evidence="2">
    <location>
        <begin position="87"/>
        <end position="107"/>
    </location>
</feature>
<feature type="transmembrane region" description="Helical" evidence="2">
    <location>
        <begin position="118"/>
        <end position="138"/>
    </location>
</feature>
<feature type="transmembrane region" description="Helical" evidence="2">
    <location>
        <begin position="160"/>
        <end position="180"/>
    </location>
</feature>
<feature type="transmembrane region" description="Helical" evidence="2">
    <location>
        <begin position="203"/>
        <end position="223"/>
    </location>
</feature>
<feature type="sequence conflict" description="In Ref. 1; BAB30020." evidence="4" ref="1">
    <original>P</original>
    <variation>L</variation>
    <location>
        <position position="253"/>
    </location>
</feature>
<evidence type="ECO:0000250" key="1">
    <source>
        <dbReference type="UniProtKB" id="Q6UX65"/>
    </source>
</evidence>
<evidence type="ECO:0000255" key="2"/>
<evidence type="ECO:0000269" key="3">
    <source>
    </source>
</evidence>
<evidence type="ECO:0000305" key="4"/>
<comment type="function">
    <text evidence="1">Plays a role in the initiation of autophagy. In the retina, might be involved in the process of photoreceptor cells renewal and recycling to preserve visual function. Induces apoptotic cell death when coexpressed with DRAM1.</text>
</comment>
<comment type="subcellular location">
    <subcellularLocation>
        <location evidence="1">Lysosome membrane</location>
        <topology evidence="1">Multi-pass membrane protein</topology>
    </subcellularLocation>
    <subcellularLocation>
        <location evidence="3">Photoreceptor inner segment</location>
    </subcellularLocation>
    <subcellularLocation>
        <location evidence="3">Apical cell membrane</location>
    </subcellularLocation>
    <text evidence="3">Localized to photoreceptor inner segments and to the apical surface of retinal pigment epithelial cells.</text>
</comment>
<comment type="tissue specificity">
    <text evidence="3">Expressed in the retina.</text>
</comment>
<comment type="similarity">
    <text evidence="4">Belongs to the DRAM/TMEM150 family.</text>
</comment>
<accession>Q9CR48</accession>
<accession>Q9D520</accession>
<organism>
    <name type="scientific">Mus musculus</name>
    <name type="common">Mouse</name>
    <dbReference type="NCBI Taxonomy" id="10090"/>
    <lineage>
        <taxon>Eukaryota</taxon>
        <taxon>Metazoa</taxon>
        <taxon>Chordata</taxon>
        <taxon>Craniata</taxon>
        <taxon>Vertebrata</taxon>
        <taxon>Euteleostomi</taxon>
        <taxon>Mammalia</taxon>
        <taxon>Eutheria</taxon>
        <taxon>Euarchontoglires</taxon>
        <taxon>Glires</taxon>
        <taxon>Rodentia</taxon>
        <taxon>Myomorpha</taxon>
        <taxon>Muroidea</taxon>
        <taxon>Muridae</taxon>
        <taxon>Murinae</taxon>
        <taxon>Mus</taxon>
        <taxon>Mus</taxon>
    </lineage>
</organism>
<keyword id="KW-0053">Apoptosis</keyword>
<keyword id="KW-0072">Autophagy</keyword>
<keyword id="KW-1003">Cell membrane</keyword>
<keyword id="KW-0458">Lysosome</keyword>
<keyword id="KW-0472">Membrane</keyword>
<keyword id="KW-1185">Reference proteome</keyword>
<keyword id="KW-0812">Transmembrane</keyword>
<keyword id="KW-1133">Transmembrane helix</keyword>
<dbReference type="EMBL" id="AK009940">
    <property type="protein sequence ID" value="BAB26598.1"/>
    <property type="molecule type" value="mRNA"/>
</dbReference>
<dbReference type="EMBL" id="AK012044">
    <property type="protein sequence ID" value="BAB27990.1"/>
    <property type="molecule type" value="mRNA"/>
</dbReference>
<dbReference type="EMBL" id="AK015888">
    <property type="protein sequence ID" value="BAB30020.1"/>
    <property type="molecule type" value="mRNA"/>
</dbReference>
<dbReference type="EMBL" id="AK052824">
    <property type="protein sequence ID" value="BAC35162.1"/>
    <property type="molecule type" value="mRNA"/>
</dbReference>
<dbReference type="EMBL" id="AK172455">
    <property type="protein sequence ID" value="BAE43014.1"/>
    <property type="molecule type" value="mRNA"/>
</dbReference>
<dbReference type="CCDS" id="CCDS17725.1"/>
<dbReference type="RefSeq" id="NP_001273915.1">
    <property type="nucleotide sequence ID" value="NM_001286986.2"/>
</dbReference>
<dbReference type="RefSeq" id="NP_001273916.1">
    <property type="nucleotide sequence ID" value="NM_001286987.2"/>
</dbReference>
<dbReference type="RefSeq" id="NP_080289.1">
    <property type="nucleotide sequence ID" value="NM_026013.4"/>
</dbReference>
<dbReference type="RefSeq" id="XP_036019136.1">
    <property type="nucleotide sequence ID" value="XM_036163243.1"/>
</dbReference>
<dbReference type="FunCoup" id="Q9CR48">
    <property type="interactions" value="1951"/>
</dbReference>
<dbReference type="STRING" id="10090.ENSMUSP00000063510"/>
<dbReference type="iPTMnet" id="Q9CR48"/>
<dbReference type="PhosphoSitePlus" id="Q9CR48"/>
<dbReference type="jPOST" id="Q9CR48"/>
<dbReference type="PaxDb" id="10090-ENSMUSP00000063510"/>
<dbReference type="PeptideAtlas" id="Q9CR48"/>
<dbReference type="ProteomicsDB" id="279484"/>
<dbReference type="Antibodypedia" id="20104">
    <property type="antibodies" value="71 antibodies from 19 providers"/>
</dbReference>
<dbReference type="DNASU" id="67171"/>
<dbReference type="Ensembl" id="ENSMUST00000067630.13">
    <property type="protein sequence ID" value="ENSMUSP00000063510.7"/>
    <property type="gene ID" value="ENSMUSG00000027900.16"/>
</dbReference>
<dbReference type="Ensembl" id="ENSMUST00000121034.8">
    <property type="protein sequence ID" value="ENSMUSP00000112680.2"/>
    <property type="gene ID" value="ENSMUSG00000027900.16"/>
</dbReference>
<dbReference type="GeneID" id="67171"/>
<dbReference type="KEGG" id="mmu:67171"/>
<dbReference type="UCSC" id="uc008qwd.2">
    <property type="organism name" value="mouse"/>
</dbReference>
<dbReference type="AGR" id="MGI:1914421"/>
<dbReference type="CTD" id="128338"/>
<dbReference type="MGI" id="MGI:1914421">
    <property type="gene designation" value="Dram2"/>
</dbReference>
<dbReference type="VEuPathDB" id="HostDB:ENSMUSG00000027900"/>
<dbReference type="eggNOG" id="KOG4320">
    <property type="taxonomic scope" value="Eukaryota"/>
</dbReference>
<dbReference type="GeneTree" id="ENSGT01030000234578"/>
<dbReference type="HOGENOM" id="CLU_059992_2_2_1"/>
<dbReference type="InParanoid" id="Q9CR48"/>
<dbReference type="OMA" id="SEWCLAF"/>
<dbReference type="OrthoDB" id="191706at2759"/>
<dbReference type="PhylomeDB" id="Q9CR48"/>
<dbReference type="TreeFam" id="TF314508"/>
<dbReference type="BioGRID-ORCS" id="67171">
    <property type="hits" value="2 hits in 77 CRISPR screens"/>
</dbReference>
<dbReference type="ChiTaRS" id="Dram2">
    <property type="organism name" value="mouse"/>
</dbReference>
<dbReference type="PRO" id="PR:Q9CR48"/>
<dbReference type="Proteomes" id="UP000000589">
    <property type="component" value="Chromosome 3"/>
</dbReference>
<dbReference type="RNAct" id="Q9CR48">
    <property type="molecule type" value="protein"/>
</dbReference>
<dbReference type="Bgee" id="ENSMUSG00000027900">
    <property type="expression patterns" value="Expressed in intercostal muscle and 259 other cell types or tissues"/>
</dbReference>
<dbReference type="ExpressionAtlas" id="Q9CR48">
    <property type="expression patterns" value="baseline and differential"/>
</dbReference>
<dbReference type="GO" id="GO:0016324">
    <property type="term" value="C:apical plasma membrane"/>
    <property type="evidence" value="ECO:0000314"/>
    <property type="project" value="UniProtKB"/>
</dbReference>
<dbReference type="GO" id="GO:0005794">
    <property type="term" value="C:Golgi apparatus"/>
    <property type="evidence" value="ECO:0007669"/>
    <property type="project" value="Ensembl"/>
</dbReference>
<dbReference type="GO" id="GO:0005765">
    <property type="term" value="C:lysosomal membrane"/>
    <property type="evidence" value="ECO:0007669"/>
    <property type="project" value="UniProtKB-SubCell"/>
</dbReference>
<dbReference type="GO" id="GO:0005764">
    <property type="term" value="C:lysosome"/>
    <property type="evidence" value="ECO:0000250"/>
    <property type="project" value="UniProtKB"/>
</dbReference>
<dbReference type="GO" id="GO:0001917">
    <property type="term" value="C:photoreceptor inner segment"/>
    <property type="evidence" value="ECO:0000314"/>
    <property type="project" value="UniProtKB"/>
</dbReference>
<dbReference type="GO" id="GO:0006915">
    <property type="term" value="P:apoptotic process"/>
    <property type="evidence" value="ECO:0007669"/>
    <property type="project" value="UniProtKB-KW"/>
</dbReference>
<dbReference type="GO" id="GO:0006914">
    <property type="term" value="P:autophagy"/>
    <property type="evidence" value="ECO:0007669"/>
    <property type="project" value="UniProtKB-KW"/>
</dbReference>
<dbReference type="GO" id="GO:0008283">
    <property type="term" value="P:cell population proliferation"/>
    <property type="evidence" value="ECO:0000315"/>
    <property type="project" value="MGI"/>
</dbReference>
<dbReference type="GO" id="GO:0010087">
    <property type="term" value="P:phloem or xylem histogenesis"/>
    <property type="evidence" value="ECO:0000315"/>
    <property type="project" value="MGI"/>
</dbReference>
<dbReference type="GO" id="GO:0045494">
    <property type="term" value="P:photoreceptor cell maintenance"/>
    <property type="evidence" value="ECO:0000315"/>
    <property type="project" value="UniProtKB"/>
</dbReference>
<dbReference type="GO" id="GO:0010506">
    <property type="term" value="P:regulation of autophagy"/>
    <property type="evidence" value="ECO:0007669"/>
    <property type="project" value="Ensembl"/>
</dbReference>
<dbReference type="GO" id="GO:0060041">
    <property type="term" value="P:retina development in camera-type eye"/>
    <property type="evidence" value="ECO:0000315"/>
    <property type="project" value="MGI"/>
</dbReference>
<dbReference type="GO" id="GO:0007601">
    <property type="term" value="P:visual perception"/>
    <property type="evidence" value="ECO:0000250"/>
    <property type="project" value="UniProtKB"/>
</dbReference>
<dbReference type="InterPro" id="IPR050911">
    <property type="entry name" value="DRAM/TMEM150_Autophagy_Mod"/>
</dbReference>
<dbReference type="InterPro" id="IPR019402">
    <property type="entry name" value="Frag1/DRAM/Sfk1"/>
</dbReference>
<dbReference type="PANTHER" id="PTHR21324:SF10">
    <property type="entry name" value="DNA DAMAGE-REGULATED AUTOPHAGY MODULATOR PROTEIN 2"/>
    <property type="match status" value="1"/>
</dbReference>
<dbReference type="PANTHER" id="PTHR21324">
    <property type="entry name" value="FASTING-INDUCIBLE INTEGRAL MEMBRANE PROTEIN TM6P1-RELATED"/>
    <property type="match status" value="1"/>
</dbReference>
<dbReference type="Pfam" id="PF10277">
    <property type="entry name" value="Frag1"/>
    <property type="match status" value="1"/>
</dbReference>
<sequence>MWWFQQGLSFLPSALVIWTFATFIFSYITAITLHHVDPALPYISDTGTIPPERCLFGVMLNIAAVLGIATMYVRYKQVHALNPEENLIIKLNKAGLVLGILSCLGLSLVANFQKSTLFIVHVCGAVLAFSMGSFYMFVQTILSYQMQPKIHSKQVFWVRLLLVIWCGVSALSMMTCSSILYSSDFGPDVVQKLHWNPEDKGYVLHLVTTAAEWSMSFSFFGFFLTYIRDFQKITLRVEANLHGLTLYDTVPCPVNNERTPLLSRDFQ</sequence>
<gene>
    <name type="primary">Dram2</name>
    <name type="synonym">Tmem77</name>
</gene>
<proteinExistence type="evidence at transcript level"/>
<protein>
    <recommendedName>
        <fullName>DNA damage-regulated autophagy modulator protein 2</fullName>
    </recommendedName>
    <alternativeName>
        <fullName>Transmembrane protein 77</fullName>
    </alternativeName>
</protein>
<reference key="1">
    <citation type="journal article" date="2005" name="Science">
        <title>The transcriptional landscape of the mammalian genome.</title>
        <authorList>
            <person name="Carninci P."/>
            <person name="Kasukawa T."/>
            <person name="Katayama S."/>
            <person name="Gough J."/>
            <person name="Frith M.C."/>
            <person name="Maeda N."/>
            <person name="Oyama R."/>
            <person name="Ravasi T."/>
            <person name="Lenhard B."/>
            <person name="Wells C."/>
            <person name="Kodzius R."/>
            <person name="Shimokawa K."/>
            <person name="Bajic V.B."/>
            <person name="Brenner S.E."/>
            <person name="Batalov S."/>
            <person name="Forrest A.R."/>
            <person name="Zavolan M."/>
            <person name="Davis M.J."/>
            <person name="Wilming L.G."/>
            <person name="Aidinis V."/>
            <person name="Allen J.E."/>
            <person name="Ambesi-Impiombato A."/>
            <person name="Apweiler R."/>
            <person name="Aturaliya R.N."/>
            <person name="Bailey T.L."/>
            <person name="Bansal M."/>
            <person name="Baxter L."/>
            <person name="Beisel K.W."/>
            <person name="Bersano T."/>
            <person name="Bono H."/>
            <person name="Chalk A.M."/>
            <person name="Chiu K.P."/>
            <person name="Choudhary V."/>
            <person name="Christoffels A."/>
            <person name="Clutterbuck D.R."/>
            <person name="Crowe M.L."/>
            <person name="Dalla E."/>
            <person name="Dalrymple B.P."/>
            <person name="de Bono B."/>
            <person name="Della Gatta G."/>
            <person name="di Bernardo D."/>
            <person name="Down T."/>
            <person name="Engstrom P."/>
            <person name="Fagiolini M."/>
            <person name="Faulkner G."/>
            <person name="Fletcher C.F."/>
            <person name="Fukushima T."/>
            <person name="Furuno M."/>
            <person name="Futaki S."/>
            <person name="Gariboldi M."/>
            <person name="Georgii-Hemming P."/>
            <person name="Gingeras T.R."/>
            <person name="Gojobori T."/>
            <person name="Green R.E."/>
            <person name="Gustincich S."/>
            <person name="Harbers M."/>
            <person name="Hayashi Y."/>
            <person name="Hensch T.K."/>
            <person name="Hirokawa N."/>
            <person name="Hill D."/>
            <person name="Huminiecki L."/>
            <person name="Iacono M."/>
            <person name="Ikeo K."/>
            <person name="Iwama A."/>
            <person name="Ishikawa T."/>
            <person name="Jakt M."/>
            <person name="Kanapin A."/>
            <person name="Katoh M."/>
            <person name="Kawasawa Y."/>
            <person name="Kelso J."/>
            <person name="Kitamura H."/>
            <person name="Kitano H."/>
            <person name="Kollias G."/>
            <person name="Krishnan S.P."/>
            <person name="Kruger A."/>
            <person name="Kummerfeld S.K."/>
            <person name="Kurochkin I.V."/>
            <person name="Lareau L.F."/>
            <person name="Lazarevic D."/>
            <person name="Lipovich L."/>
            <person name="Liu J."/>
            <person name="Liuni S."/>
            <person name="McWilliam S."/>
            <person name="Madan Babu M."/>
            <person name="Madera M."/>
            <person name="Marchionni L."/>
            <person name="Matsuda H."/>
            <person name="Matsuzawa S."/>
            <person name="Miki H."/>
            <person name="Mignone F."/>
            <person name="Miyake S."/>
            <person name="Morris K."/>
            <person name="Mottagui-Tabar S."/>
            <person name="Mulder N."/>
            <person name="Nakano N."/>
            <person name="Nakauchi H."/>
            <person name="Ng P."/>
            <person name="Nilsson R."/>
            <person name="Nishiguchi S."/>
            <person name="Nishikawa S."/>
            <person name="Nori F."/>
            <person name="Ohara O."/>
            <person name="Okazaki Y."/>
            <person name="Orlando V."/>
            <person name="Pang K.C."/>
            <person name="Pavan W.J."/>
            <person name="Pavesi G."/>
            <person name="Pesole G."/>
            <person name="Petrovsky N."/>
            <person name="Piazza S."/>
            <person name="Reed J."/>
            <person name="Reid J.F."/>
            <person name="Ring B.Z."/>
            <person name="Ringwald M."/>
            <person name="Rost B."/>
            <person name="Ruan Y."/>
            <person name="Salzberg S.L."/>
            <person name="Sandelin A."/>
            <person name="Schneider C."/>
            <person name="Schoenbach C."/>
            <person name="Sekiguchi K."/>
            <person name="Semple C.A."/>
            <person name="Seno S."/>
            <person name="Sessa L."/>
            <person name="Sheng Y."/>
            <person name="Shibata Y."/>
            <person name="Shimada H."/>
            <person name="Shimada K."/>
            <person name="Silva D."/>
            <person name="Sinclair B."/>
            <person name="Sperling S."/>
            <person name="Stupka E."/>
            <person name="Sugiura K."/>
            <person name="Sultana R."/>
            <person name="Takenaka Y."/>
            <person name="Taki K."/>
            <person name="Tammoja K."/>
            <person name="Tan S.L."/>
            <person name="Tang S."/>
            <person name="Taylor M.S."/>
            <person name="Tegner J."/>
            <person name="Teichmann S.A."/>
            <person name="Ueda H.R."/>
            <person name="van Nimwegen E."/>
            <person name="Verardo R."/>
            <person name="Wei C.L."/>
            <person name="Yagi K."/>
            <person name="Yamanishi H."/>
            <person name="Zabarovsky E."/>
            <person name="Zhu S."/>
            <person name="Zimmer A."/>
            <person name="Hide W."/>
            <person name="Bult C."/>
            <person name="Grimmond S.M."/>
            <person name="Teasdale R.D."/>
            <person name="Liu E.T."/>
            <person name="Brusic V."/>
            <person name="Quackenbush J."/>
            <person name="Wahlestedt C."/>
            <person name="Mattick J.S."/>
            <person name="Hume D.A."/>
            <person name="Kai C."/>
            <person name="Sasaki D."/>
            <person name="Tomaru Y."/>
            <person name="Fukuda S."/>
            <person name="Kanamori-Katayama M."/>
            <person name="Suzuki M."/>
            <person name="Aoki J."/>
            <person name="Arakawa T."/>
            <person name="Iida J."/>
            <person name="Imamura K."/>
            <person name="Itoh M."/>
            <person name="Kato T."/>
            <person name="Kawaji H."/>
            <person name="Kawagashira N."/>
            <person name="Kawashima T."/>
            <person name="Kojima M."/>
            <person name="Kondo S."/>
            <person name="Konno H."/>
            <person name="Nakano K."/>
            <person name="Ninomiya N."/>
            <person name="Nishio T."/>
            <person name="Okada M."/>
            <person name="Plessy C."/>
            <person name="Shibata K."/>
            <person name="Shiraki T."/>
            <person name="Suzuki S."/>
            <person name="Tagami M."/>
            <person name="Waki K."/>
            <person name="Watahiki A."/>
            <person name="Okamura-Oho Y."/>
            <person name="Suzuki H."/>
            <person name="Kawai J."/>
            <person name="Hayashizaki Y."/>
        </authorList>
    </citation>
    <scope>NUCLEOTIDE SEQUENCE [LARGE SCALE MRNA]</scope>
    <source>
        <strain>C57BL/6J</strain>
        <strain>NOD</strain>
        <tissue>Embryo</tissue>
        <tissue>Mammary gland</tissue>
        <tissue>Spleen</tissue>
        <tissue>Testis</tissue>
        <tissue>Tongue</tissue>
    </source>
</reference>
<reference key="2">
    <citation type="journal article" date="2015" name="Am. J. Hum. Genet.">
        <title>Biallelic mutations in the autophagy regulator DRAM2 cause retinal dystrophy with early macular involvement.</title>
        <authorList>
            <consortium name="UK Inherited Retinal Disease Consortium"/>
            <person name="El-Asrag M.E."/>
            <person name="Sergouniotis P.I."/>
            <person name="McKibbin M."/>
            <person name="Plagnol V."/>
            <person name="Sheridan E."/>
            <person name="Waseem N."/>
            <person name="Abdelhamed Z."/>
            <person name="McKeefry D."/>
            <person name="Van Schil K."/>
            <person name="Poulter J.A."/>
            <person name="Johnson C.A."/>
            <person name="Carr I.M."/>
            <person name="Leroy B.P."/>
            <person name="De Baere E."/>
            <person name="Inglehearn C.F."/>
            <person name="Webster A.R."/>
            <person name="Toomes C."/>
            <person name="Ali M."/>
        </authorList>
    </citation>
    <scope>SUBCELLULAR LOCATION</scope>
    <scope>TISSUE SPECIFICITY</scope>
</reference>